<name>PSAB_HETTR</name>
<reference key="1">
    <citation type="journal article" date="1999" name="Nature">
        <title>Single gene circles in dinoflagellate chloroplast genomes.</title>
        <authorList>
            <person name="Zhang Z."/>
            <person name="Green B.R."/>
            <person name="Cavalier-Smith T."/>
        </authorList>
    </citation>
    <scope>NUCLEOTIDE SEQUENCE [GENOMIC DNA]</scope>
    <source>
        <strain>CCMP449</strain>
    </source>
</reference>
<comment type="function">
    <text evidence="1">PsaA and PsaB bind P700, the primary electron donor of photosystem I (PSI), as well as the electron acceptors A0, A1 and FX. PSI is a plastocyanin/cytochrome c6-ferredoxin oxidoreductase, converting photonic excitation into a charge separation, which transfers an electron from the donor P700 chlorophyll pair to the spectroscopically characterized acceptors A0, A1, FX, FA and FB in turn. Oxidized P700 is reduced on the lumenal side of the thylakoid membrane by plastocyanin or cytochrome c6 (By similarity).</text>
</comment>
<comment type="catalytic activity">
    <reaction>
        <text>reduced [plastocyanin] + hnu + oxidized [2Fe-2S]-[ferredoxin] = oxidized [plastocyanin] + reduced [2Fe-2S]-[ferredoxin]</text>
        <dbReference type="Rhea" id="RHEA:30407"/>
        <dbReference type="Rhea" id="RHEA-COMP:10000"/>
        <dbReference type="Rhea" id="RHEA-COMP:10001"/>
        <dbReference type="Rhea" id="RHEA-COMP:10039"/>
        <dbReference type="Rhea" id="RHEA-COMP:10040"/>
        <dbReference type="ChEBI" id="CHEBI:29036"/>
        <dbReference type="ChEBI" id="CHEBI:30212"/>
        <dbReference type="ChEBI" id="CHEBI:33737"/>
        <dbReference type="ChEBI" id="CHEBI:33738"/>
        <dbReference type="ChEBI" id="CHEBI:49552"/>
        <dbReference type="EC" id="1.97.1.12"/>
    </reaction>
</comment>
<comment type="cofactor">
    <text evidence="1">P700 is a chlorophyll a/chlorophyll a' dimer, A0 is one or more chlorophyll a, A1 is one or both phylloquinones and FX is a shared 4Fe-4S iron-sulfur center.</text>
</comment>
<comment type="subunit">
    <text evidence="1">The PsaA/B heterodimer binds the P700 chlorophyll special pair and subsequent electron acceptors. PSI consists of a core antenna complex that captures photons, and an electron transfer chain that converts photonic excitation into a charge separation. The eukaryotic PSI reaction center is composed of at least 11 subunits (By similarity).</text>
</comment>
<comment type="subcellular location">
    <subcellularLocation>
        <location evidence="1">Plastid</location>
        <location evidence="1">Chloroplast thylakoid membrane</location>
        <topology evidence="1">Multi-pass membrane protein</topology>
    </subcellularLocation>
</comment>
<comment type="similarity">
    <text evidence="3">Belongs to the PsaA/PsaB family.</text>
</comment>
<dbReference type="EC" id="1.97.1.12"/>
<dbReference type="EMBL" id="AF130032">
    <property type="protein sequence ID" value="AAD44699.1"/>
    <property type="molecule type" value="Genomic_DNA"/>
</dbReference>
<dbReference type="SMR" id="Q9XQV2"/>
<dbReference type="GO" id="GO:0009535">
    <property type="term" value="C:chloroplast thylakoid membrane"/>
    <property type="evidence" value="ECO:0007669"/>
    <property type="project" value="UniProtKB-SubCell"/>
</dbReference>
<dbReference type="GO" id="GO:0009522">
    <property type="term" value="C:photosystem I"/>
    <property type="evidence" value="ECO:0007669"/>
    <property type="project" value="UniProtKB-KW"/>
</dbReference>
<dbReference type="GO" id="GO:0051539">
    <property type="term" value="F:4 iron, 4 sulfur cluster binding"/>
    <property type="evidence" value="ECO:0007669"/>
    <property type="project" value="UniProtKB-KW"/>
</dbReference>
<dbReference type="GO" id="GO:0016168">
    <property type="term" value="F:chlorophyll binding"/>
    <property type="evidence" value="ECO:0007669"/>
    <property type="project" value="UniProtKB-KW"/>
</dbReference>
<dbReference type="GO" id="GO:0046872">
    <property type="term" value="F:metal ion binding"/>
    <property type="evidence" value="ECO:0007669"/>
    <property type="project" value="UniProtKB-KW"/>
</dbReference>
<dbReference type="GO" id="GO:0016491">
    <property type="term" value="F:oxidoreductase activity"/>
    <property type="evidence" value="ECO:0007669"/>
    <property type="project" value="UniProtKB-KW"/>
</dbReference>
<dbReference type="GO" id="GO:0015979">
    <property type="term" value="P:photosynthesis"/>
    <property type="evidence" value="ECO:0007669"/>
    <property type="project" value="UniProtKB-KW"/>
</dbReference>
<dbReference type="Gene3D" id="1.20.1130.10">
    <property type="entry name" value="Photosystem I PsaA/PsaB"/>
    <property type="match status" value="1"/>
</dbReference>
<dbReference type="InterPro" id="IPR001280">
    <property type="entry name" value="PSI_PsaA/B"/>
</dbReference>
<dbReference type="InterPro" id="IPR020586">
    <property type="entry name" value="PSI_PsaA/B_CS"/>
</dbReference>
<dbReference type="InterPro" id="IPR036408">
    <property type="entry name" value="PSI_PsaA/B_sf"/>
</dbReference>
<dbReference type="PANTHER" id="PTHR30128">
    <property type="entry name" value="OUTER MEMBRANE PROTEIN, OMPA-RELATED"/>
    <property type="match status" value="1"/>
</dbReference>
<dbReference type="PANTHER" id="PTHR30128:SF19">
    <property type="entry name" value="PHOTOSYSTEM I P700 CHLOROPHYLL A APOPROTEIN A1-RELATED"/>
    <property type="match status" value="1"/>
</dbReference>
<dbReference type="Pfam" id="PF00223">
    <property type="entry name" value="PsaA_PsaB"/>
    <property type="match status" value="2"/>
</dbReference>
<dbReference type="PIRSF" id="PIRSF002905">
    <property type="entry name" value="PSI_A"/>
    <property type="match status" value="1"/>
</dbReference>
<dbReference type="PRINTS" id="PR00257">
    <property type="entry name" value="PHOTSYSPSAAB"/>
</dbReference>
<dbReference type="SUPFAM" id="SSF81558">
    <property type="entry name" value="Photosystem I subunits PsaA/PsaB"/>
    <property type="match status" value="1"/>
</dbReference>
<dbReference type="PROSITE" id="PS00419">
    <property type="entry name" value="PHOTOSYSTEM_I_PSAAB"/>
    <property type="match status" value="1"/>
</dbReference>
<feature type="chain" id="PRO_0000088617" description="Photosystem I P700 chlorophyll a apoprotein A2">
    <location>
        <begin position="1"/>
        <end position="776"/>
    </location>
</feature>
<feature type="transmembrane region" description="Helical; Name=I" evidence="2">
    <location>
        <begin position="57"/>
        <end position="80"/>
    </location>
</feature>
<feature type="transmembrane region" description="Helical; Name=II" evidence="2">
    <location>
        <begin position="150"/>
        <end position="173"/>
    </location>
</feature>
<feature type="transmembrane region" description="Helical; Name=III" evidence="2">
    <location>
        <begin position="233"/>
        <end position="257"/>
    </location>
</feature>
<feature type="transmembrane region" description="Helical; Name=IV" evidence="2">
    <location>
        <begin position="334"/>
        <end position="352"/>
    </location>
</feature>
<feature type="transmembrane region" description="Helical; Name=V" evidence="2">
    <location>
        <begin position="382"/>
        <end position="405"/>
    </location>
</feature>
<feature type="transmembrane region" description="Helical; Name=VI" evidence="2">
    <location>
        <begin position="421"/>
        <end position="447"/>
    </location>
</feature>
<feature type="transmembrane region" description="Helical; Name=VII" evidence="2">
    <location>
        <begin position="472"/>
        <end position="494"/>
    </location>
</feature>
<feature type="transmembrane region" description="Helical; Name=VIII" evidence="2">
    <location>
        <begin position="561"/>
        <end position="579"/>
    </location>
</feature>
<feature type="transmembrane region" description="Helical; Name=IX" evidence="2">
    <location>
        <begin position="619"/>
        <end position="640"/>
    </location>
</feature>
<feature type="transmembrane region" description="Helical; Name=X" evidence="2">
    <location>
        <begin position="687"/>
        <end position="709"/>
    </location>
</feature>
<feature type="transmembrane region" description="Helical; Name=XI" evidence="2">
    <location>
        <begin position="753"/>
        <end position="773"/>
    </location>
</feature>
<feature type="binding site" evidence="1">
    <location>
        <position position="603"/>
    </location>
    <ligand>
        <name>[4Fe-4S] cluster</name>
        <dbReference type="ChEBI" id="CHEBI:49883"/>
        <note>ligand shared between dimeric partners</note>
    </ligand>
</feature>
<feature type="binding site" evidence="1">
    <location>
        <position position="612"/>
    </location>
    <ligand>
        <name>[4Fe-4S] cluster</name>
        <dbReference type="ChEBI" id="CHEBI:49883"/>
        <note>ligand shared between dimeric partners</note>
    </ligand>
</feature>
<feature type="binding site" description="axial binding residue" evidence="1">
    <location>
        <position position="698"/>
    </location>
    <ligand>
        <name>chlorophyll a</name>
        <dbReference type="ChEBI" id="CHEBI:58416"/>
        <label>B1</label>
    </ligand>
    <ligandPart>
        <name>Mg</name>
        <dbReference type="ChEBI" id="CHEBI:25107"/>
    </ligandPart>
</feature>
<feature type="binding site" description="axial binding residue" evidence="1">
    <location>
        <position position="706"/>
    </location>
    <ligand>
        <name>chlorophyll a</name>
        <dbReference type="ChEBI" id="CHEBI:58416"/>
        <label>B3</label>
    </ligand>
    <ligandPart>
        <name>Mg</name>
        <dbReference type="ChEBI" id="CHEBI:25107"/>
    </ligandPart>
</feature>
<feature type="binding site" evidence="1">
    <location>
        <position position="714"/>
    </location>
    <ligand>
        <name>chlorophyll a</name>
        <dbReference type="ChEBI" id="CHEBI:58416"/>
        <label>B3</label>
    </ligand>
</feature>
<feature type="binding site" evidence="1">
    <location>
        <position position="715"/>
    </location>
    <ligand>
        <name>phylloquinone</name>
        <dbReference type="ChEBI" id="CHEBI:18067"/>
        <label>B</label>
    </ligand>
</feature>
<proteinExistence type="inferred from homology"/>
<evidence type="ECO:0000250" key="1"/>
<evidence type="ECO:0000255" key="2"/>
<evidence type="ECO:0000305" key="3"/>
<accession>Q9XQV2</accession>
<keyword id="KW-0004">4Fe-4S</keyword>
<keyword id="KW-0148">Chlorophyll</keyword>
<keyword id="KW-0150">Chloroplast</keyword>
<keyword id="KW-0157">Chromophore</keyword>
<keyword id="KW-0249">Electron transport</keyword>
<keyword id="KW-0408">Iron</keyword>
<keyword id="KW-0411">Iron-sulfur</keyword>
<keyword id="KW-0460">Magnesium</keyword>
<keyword id="KW-0472">Membrane</keyword>
<keyword id="KW-0479">Metal-binding</keyword>
<keyword id="KW-0560">Oxidoreductase</keyword>
<keyword id="KW-0602">Photosynthesis</keyword>
<keyword id="KW-0603">Photosystem I</keyword>
<keyword id="KW-0934">Plastid</keyword>
<keyword id="KW-0793">Thylakoid</keyword>
<keyword id="KW-0812">Transmembrane</keyword>
<keyword id="KW-1133">Transmembrane helix</keyword>
<keyword id="KW-0813">Transport</keyword>
<sequence>MSLLDGRILGFTTHSDSFVSKRQSNGAATGRFFQVIGNIHDIESYYGIHGSQVNLQIFLSHFGHLAIIFLWAAGNLFHIGWNGNYELWILNPISTMPIAHGIWDPHFGAQGEAVWGGVSATSGGSEAVVVSYSGIYNWLYAVGFTSVYEIYNFVIVLELLAVAALLLGKTHLIYNEELIQWLGTNKPYYRVGSDNEEVVSLYKKLALDMKVYPMFIWPFRIFLAAFDASGLRLNFHIGALIGFTSLAWAGHLIHVAIPASRGIYHTISPVGDSTFAEPSLKALYPFYSGNWAYYAQDIDKDNHIFGSTVGAGKAILTFLGGVKSDTASLYLTDIAHHHLAIGVLFIWAAHLYSSLYKGFGHRIRDILVSANSGMMIRSMNSYHLQLALACAGVSVITSVVGQHIYSLAPYPYLAYDYVTTVALYLHHSWIASLLMMAAFAHAGIFLVRDYTVNPKTTTGEDIIGRVLAHKAAIISHLSWVSLWLGFHTLGVYIHNDTVTAFGEPQNSILIEPIFAQIIQSASGKTLYGTTLFSVVNPSSGWVQSVNKSFGSLLLPIGPGDLLAHHAIALGLHVTVLILMKGALDARGSKLMPDKIHFGYGFACDGPGRGGTCDISAWDSFYLAMFWMLNTNAWTIFYFHWKELTLWQNITFQFDESSNYLNGWFRDYLWFNSGSLIRGYDALGANDLSVWAWIFLAAHLCWATGFMFLISWRGYWQELIDIILYMHLKTPILYDIWNAGVYTPVALSIVQARFIGLVHFAVGFIITYAAFIVGSTT</sequence>
<protein>
    <recommendedName>
        <fullName>Photosystem I P700 chlorophyll a apoprotein A2</fullName>
        <ecNumber>1.97.1.12</ecNumber>
    </recommendedName>
    <alternativeName>
        <fullName>PSI-B</fullName>
    </alternativeName>
    <alternativeName>
        <fullName>PsaB</fullName>
    </alternativeName>
</protein>
<geneLocation type="chloroplast"/>
<organism>
    <name type="scientific">Heterocapsa triquetra</name>
    <name type="common">Dinoflagellate</name>
    <name type="synonym">Glenodinium triquetrum</name>
    <dbReference type="NCBI Taxonomy" id="66468"/>
    <lineage>
        <taxon>Eukaryota</taxon>
        <taxon>Sar</taxon>
        <taxon>Alveolata</taxon>
        <taxon>Dinophyceae</taxon>
        <taxon>Peridiniales</taxon>
        <taxon>Heterocapsaceae</taxon>
        <taxon>Heterocapsa</taxon>
    </lineage>
</organism>
<gene>
    <name type="primary">psaB</name>
</gene>